<gene>
    <name type="ordered locus">CPn_0047</name>
    <name type="ordered locus">CP_0727</name>
    <name type="ordered locus">CPj0047</name>
    <name type="ordered locus">CpB0048</name>
</gene>
<dbReference type="EMBL" id="AE001363">
    <property type="protein sequence ID" value="AAD18200.1"/>
    <property type="molecule type" value="Genomic_DNA"/>
</dbReference>
<dbReference type="EMBL" id="AE002161">
    <property type="protein sequence ID" value="AAF38532.1"/>
    <property type="status" value="ALT_INIT"/>
    <property type="molecule type" value="Genomic_DNA"/>
</dbReference>
<dbReference type="EMBL" id="BA000008">
    <property type="protein sequence ID" value="BAA98258.1"/>
    <property type="molecule type" value="Genomic_DNA"/>
</dbReference>
<dbReference type="EMBL" id="AE009440">
    <property type="protein sequence ID" value="AAP97981.1"/>
    <property type="molecule type" value="Genomic_DNA"/>
</dbReference>
<dbReference type="PIR" id="A81546">
    <property type="entry name" value="A81546"/>
</dbReference>
<dbReference type="PIR" id="E72125">
    <property type="entry name" value="E72125"/>
</dbReference>
<dbReference type="PIR" id="H86496">
    <property type="entry name" value="H86496"/>
</dbReference>
<dbReference type="RefSeq" id="NP_224255.1">
    <property type="nucleotide sequence ID" value="NC_000922.1"/>
</dbReference>
<dbReference type="STRING" id="406984.CPK_ORF00550"/>
<dbReference type="KEGG" id="cpa:CP_0727"/>
<dbReference type="KEGG" id="cpj:CPj0047"/>
<dbReference type="KEGG" id="cpn:CPn_0047"/>
<dbReference type="KEGG" id="cpt:CpB0048"/>
<dbReference type="PATRIC" id="fig|115713.3.peg.55"/>
<dbReference type="HOGENOM" id="CLU_2823261_0_0_0"/>
<dbReference type="OrthoDB" id="9896108at2"/>
<dbReference type="Proteomes" id="UP000000583">
    <property type="component" value="Chromosome"/>
</dbReference>
<dbReference type="Proteomes" id="UP000000801">
    <property type="component" value="Chromosome"/>
</dbReference>
<organism>
    <name type="scientific">Chlamydia pneumoniae</name>
    <name type="common">Chlamydophila pneumoniae</name>
    <dbReference type="NCBI Taxonomy" id="83558"/>
    <lineage>
        <taxon>Bacteria</taxon>
        <taxon>Pseudomonadati</taxon>
        <taxon>Chlamydiota</taxon>
        <taxon>Chlamydiia</taxon>
        <taxon>Chlamydiales</taxon>
        <taxon>Chlamydiaceae</taxon>
        <taxon>Chlamydia/Chlamydophila group</taxon>
        <taxon>Chlamydia</taxon>
    </lineage>
</organism>
<proteinExistence type="predicted"/>
<evidence type="ECO:0000305" key="1"/>
<accession>Q9Z9D4</accession>
<accession>Q9JSK3</accession>
<accession>Q9K203</accession>
<name>Y047_CHLPN</name>
<reference key="1">
    <citation type="journal article" date="1999" name="Nat. Genet.">
        <title>Comparative genomes of Chlamydia pneumoniae and C. trachomatis.</title>
        <authorList>
            <person name="Kalman S."/>
            <person name="Mitchell W.P."/>
            <person name="Marathe R."/>
            <person name="Lammel C.J."/>
            <person name="Fan J."/>
            <person name="Hyman R.W."/>
            <person name="Olinger L."/>
            <person name="Grimwood J."/>
            <person name="Davis R.W."/>
            <person name="Stephens R.S."/>
        </authorList>
    </citation>
    <scope>NUCLEOTIDE SEQUENCE [LARGE SCALE GENOMIC DNA]</scope>
    <source>
        <strain>CWL029</strain>
    </source>
</reference>
<reference key="2">
    <citation type="journal article" date="2000" name="Nucleic Acids Res.">
        <title>Genome sequences of Chlamydia trachomatis MoPn and Chlamydia pneumoniae AR39.</title>
        <authorList>
            <person name="Read T.D."/>
            <person name="Brunham R.C."/>
            <person name="Shen C."/>
            <person name="Gill S.R."/>
            <person name="Heidelberg J.F."/>
            <person name="White O."/>
            <person name="Hickey E.K."/>
            <person name="Peterson J.D."/>
            <person name="Utterback T.R."/>
            <person name="Berry K.J."/>
            <person name="Bass S."/>
            <person name="Linher K.D."/>
            <person name="Weidman J.F."/>
            <person name="Khouri H.M."/>
            <person name="Craven B."/>
            <person name="Bowman C."/>
            <person name="Dodson R.J."/>
            <person name="Gwinn M.L."/>
            <person name="Nelson W.C."/>
            <person name="DeBoy R.T."/>
            <person name="Kolonay J.F."/>
            <person name="McClarty G."/>
            <person name="Salzberg S.L."/>
            <person name="Eisen J.A."/>
            <person name="Fraser C.M."/>
        </authorList>
    </citation>
    <scope>NUCLEOTIDE SEQUENCE [LARGE SCALE GENOMIC DNA]</scope>
    <source>
        <strain>AR39</strain>
    </source>
</reference>
<reference key="3">
    <citation type="journal article" date="2000" name="Nucleic Acids Res.">
        <title>Comparison of whole genome sequences of Chlamydia pneumoniae J138 from Japan and CWL029 from USA.</title>
        <authorList>
            <person name="Shirai M."/>
            <person name="Hirakawa H."/>
            <person name="Kimoto M."/>
            <person name="Tabuchi M."/>
            <person name="Kishi F."/>
            <person name="Ouchi K."/>
            <person name="Shiba T."/>
            <person name="Ishii K."/>
            <person name="Hattori M."/>
            <person name="Kuhara S."/>
            <person name="Nakazawa T."/>
        </authorList>
    </citation>
    <scope>NUCLEOTIDE SEQUENCE [LARGE SCALE GENOMIC DNA]</scope>
    <source>
        <strain>J138</strain>
    </source>
</reference>
<reference key="4">
    <citation type="submission" date="2002-05" db="EMBL/GenBank/DDBJ databases">
        <title>The genome sequence of Chlamydia pneumoniae TW183 and comparison with other Chlamydia strains based on whole genome sequence analysis.</title>
        <authorList>
            <person name="Geng M.M."/>
            <person name="Schuhmacher A."/>
            <person name="Muehldorfer I."/>
            <person name="Bensch K.W."/>
            <person name="Schaefer K.P."/>
            <person name="Schneider S."/>
            <person name="Pohl T."/>
            <person name="Essig A."/>
            <person name="Marre R."/>
            <person name="Melchers K."/>
        </authorList>
    </citation>
    <scope>NUCLEOTIDE SEQUENCE [LARGE SCALE GENOMIC DNA]</scope>
    <source>
        <strain>TW-183</strain>
    </source>
</reference>
<protein>
    <recommendedName>
        <fullName>Uncharacterized protein CPn_0047/CP_0727/CPj0047/CpB0048</fullName>
    </recommendedName>
</protein>
<sequence>MTIVGFFRFVLEGILTMYHFQKIRMTLTTQGFVLNKSLRKDYELWFVYGSCPESKVKLQTSSHKWL</sequence>
<comment type="sequence caution" evidence="1">
    <conflict type="erroneous initiation">
        <sequence resource="EMBL-CDS" id="AAF38532"/>
    </conflict>
</comment>
<feature type="chain" id="PRO_0000218350" description="Uncharacterized protein CPn_0047/CP_0727/CPj0047/CpB0048">
    <location>
        <begin position="1"/>
        <end position="66"/>
    </location>
</feature>
<feature type="sequence conflict" description="In Ref. 3; BAA98258." evidence="1" ref="3">
    <original>KL</original>
    <variation>NR</variation>
    <location>
        <begin position="57"/>
        <end position="58"/>
    </location>
</feature>